<comment type="function">
    <text evidence="1">The RuvA-RuvB-RuvC complex processes Holliday junction (HJ) DNA during genetic recombination and DNA repair, while the RuvA-RuvB complex plays an important role in the rescue of blocked DNA replication forks via replication fork reversal (RFR). RuvA specifically binds to HJ cruciform DNA, conferring on it an open structure. The RuvB hexamer acts as an ATP-dependent pump, pulling dsDNA into and through the RuvAB complex. HJ branch migration allows RuvC to scan DNA until it finds its consensus sequence, where it cleaves and resolves the cruciform DNA.</text>
</comment>
<comment type="subunit">
    <text evidence="1">Homotetramer. Forms an RuvA(8)-RuvB(12)-Holliday junction (HJ) complex. HJ DNA is sandwiched between 2 RuvA tetramers; dsDNA enters through RuvA and exits via RuvB. An RuvB hexamer assembles on each DNA strand where it exits the tetramer. Each RuvB hexamer is contacted by two RuvA subunits (via domain III) on 2 adjacent RuvB subunits; this complex drives branch migration. In the full resolvosome a probable DNA-RuvA(4)-RuvB(12)-RuvC(2) complex forms which resolves the HJ.</text>
</comment>
<comment type="subcellular location">
    <subcellularLocation>
        <location evidence="1">Cytoplasm</location>
    </subcellularLocation>
</comment>
<comment type="domain">
    <text evidence="1">Has three domains with a flexible linker between the domains II and III and assumes an 'L' shape. Domain III is highly mobile and contacts RuvB.</text>
</comment>
<comment type="similarity">
    <text evidence="1">Belongs to the RuvA family.</text>
</comment>
<name>RUVA_PARUW</name>
<evidence type="ECO:0000255" key="1">
    <source>
        <dbReference type="HAMAP-Rule" id="MF_00031"/>
    </source>
</evidence>
<dbReference type="EMBL" id="BX908798">
    <property type="protein sequence ID" value="CAF22744.1"/>
    <property type="molecule type" value="Genomic_DNA"/>
</dbReference>
<dbReference type="RefSeq" id="WP_011174570.1">
    <property type="nucleotide sequence ID" value="NC_005861.2"/>
</dbReference>
<dbReference type="SMR" id="Q6MFA5"/>
<dbReference type="STRING" id="264201.pc0020"/>
<dbReference type="KEGG" id="pcu:PC_RS00095"/>
<dbReference type="eggNOG" id="COG0632">
    <property type="taxonomic scope" value="Bacteria"/>
</dbReference>
<dbReference type="HOGENOM" id="CLU_087936_0_0_0"/>
<dbReference type="OrthoDB" id="5293449at2"/>
<dbReference type="Proteomes" id="UP000000529">
    <property type="component" value="Chromosome"/>
</dbReference>
<dbReference type="GO" id="GO:0005737">
    <property type="term" value="C:cytoplasm"/>
    <property type="evidence" value="ECO:0007669"/>
    <property type="project" value="UniProtKB-SubCell"/>
</dbReference>
<dbReference type="GO" id="GO:0009379">
    <property type="term" value="C:Holliday junction helicase complex"/>
    <property type="evidence" value="ECO:0007669"/>
    <property type="project" value="InterPro"/>
</dbReference>
<dbReference type="GO" id="GO:0048476">
    <property type="term" value="C:Holliday junction resolvase complex"/>
    <property type="evidence" value="ECO:0007669"/>
    <property type="project" value="UniProtKB-UniRule"/>
</dbReference>
<dbReference type="GO" id="GO:0005524">
    <property type="term" value="F:ATP binding"/>
    <property type="evidence" value="ECO:0007669"/>
    <property type="project" value="InterPro"/>
</dbReference>
<dbReference type="GO" id="GO:0000400">
    <property type="term" value="F:four-way junction DNA binding"/>
    <property type="evidence" value="ECO:0007669"/>
    <property type="project" value="UniProtKB-UniRule"/>
</dbReference>
<dbReference type="GO" id="GO:0009378">
    <property type="term" value="F:four-way junction helicase activity"/>
    <property type="evidence" value="ECO:0007669"/>
    <property type="project" value="InterPro"/>
</dbReference>
<dbReference type="GO" id="GO:0006310">
    <property type="term" value="P:DNA recombination"/>
    <property type="evidence" value="ECO:0007669"/>
    <property type="project" value="UniProtKB-UniRule"/>
</dbReference>
<dbReference type="GO" id="GO:0006281">
    <property type="term" value="P:DNA repair"/>
    <property type="evidence" value="ECO:0007669"/>
    <property type="project" value="UniProtKB-UniRule"/>
</dbReference>
<dbReference type="CDD" id="cd14332">
    <property type="entry name" value="UBA_RuvA_C"/>
    <property type="match status" value="1"/>
</dbReference>
<dbReference type="Gene3D" id="1.10.150.20">
    <property type="entry name" value="5' to 3' exonuclease, C-terminal subdomain"/>
    <property type="match status" value="1"/>
</dbReference>
<dbReference type="Gene3D" id="1.10.8.10">
    <property type="entry name" value="DNA helicase RuvA subunit, C-terminal domain"/>
    <property type="match status" value="1"/>
</dbReference>
<dbReference type="Gene3D" id="2.40.50.140">
    <property type="entry name" value="Nucleic acid-binding proteins"/>
    <property type="match status" value="1"/>
</dbReference>
<dbReference type="HAMAP" id="MF_00031">
    <property type="entry name" value="DNA_HJ_migration_RuvA"/>
    <property type="match status" value="1"/>
</dbReference>
<dbReference type="InterPro" id="IPR013849">
    <property type="entry name" value="DNA_helicase_Holl-junc_RuvA_I"/>
</dbReference>
<dbReference type="InterPro" id="IPR003583">
    <property type="entry name" value="Hlx-hairpin-Hlx_DNA-bd_motif"/>
</dbReference>
<dbReference type="InterPro" id="IPR012340">
    <property type="entry name" value="NA-bd_OB-fold"/>
</dbReference>
<dbReference type="InterPro" id="IPR000085">
    <property type="entry name" value="RuvA"/>
</dbReference>
<dbReference type="InterPro" id="IPR010994">
    <property type="entry name" value="RuvA_2-like"/>
</dbReference>
<dbReference type="InterPro" id="IPR011114">
    <property type="entry name" value="RuvA_C"/>
</dbReference>
<dbReference type="InterPro" id="IPR036267">
    <property type="entry name" value="RuvA_C_sf"/>
</dbReference>
<dbReference type="NCBIfam" id="TIGR00084">
    <property type="entry name" value="ruvA"/>
    <property type="match status" value="1"/>
</dbReference>
<dbReference type="Pfam" id="PF14520">
    <property type="entry name" value="HHH_5"/>
    <property type="match status" value="1"/>
</dbReference>
<dbReference type="Pfam" id="PF07499">
    <property type="entry name" value="RuvA_C"/>
    <property type="match status" value="1"/>
</dbReference>
<dbReference type="Pfam" id="PF01330">
    <property type="entry name" value="RuvA_N"/>
    <property type="match status" value="1"/>
</dbReference>
<dbReference type="SMART" id="SM00278">
    <property type="entry name" value="HhH1"/>
    <property type="match status" value="2"/>
</dbReference>
<dbReference type="SUPFAM" id="SSF46929">
    <property type="entry name" value="DNA helicase RuvA subunit, C-terminal domain"/>
    <property type="match status" value="1"/>
</dbReference>
<dbReference type="SUPFAM" id="SSF50249">
    <property type="entry name" value="Nucleic acid-binding proteins"/>
    <property type="match status" value="1"/>
</dbReference>
<dbReference type="SUPFAM" id="SSF47781">
    <property type="entry name" value="RuvA domain 2-like"/>
    <property type="match status" value="1"/>
</dbReference>
<keyword id="KW-0963">Cytoplasm</keyword>
<keyword id="KW-0227">DNA damage</keyword>
<keyword id="KW-0233">DNA recombination</keyword>
<keyword id="KW-0234">DNA repair</keyword>
<keyword id="KW-0238">DNA-binding</keyword>
<keyword id="KW-1185">Reference proteome</keyword>
<protein>
    <recommendedName>
        <fullName evidence="1">Holliday junction branch migration complex subunit RuvA</fullName>
    </recommendedName>
</protein>
<accession>Q6MFA5</accession>
<proteinExistence type="inferred from homology"/>
<gene>
    <name evidence="1" type="primary">ruvA</name>
    <name type="ordered locus">pc0020</name>
</gene>
<sequence>MFAYIKGVLAFFNPSQAIVDVHGVGYLLFIPCRLLGQLPQIGEPVQFYTTYVVREFSHTLYGFLSYQERDIFEILMNVTGIGPKMALSLIGHLSMSELQIAVMRQDLSTLCRVPGVGKKTAERLIVELKDKLAAIGHLDTSDHIEPLTQDPKSKSVQDAMLALINLGYNQTTAQKAIKQGMKELPEEIDLAQLITVALKHV</sequence>
<organism>
    <name type="scientific">Protochlamydia amoebophila (strain UWE25)</name>
    <dbReference type="NCBI Taxonomy" id="264201"/>
    <lineage>
        <taxon>Bacteria</taxon>
        <taxon>Pseudomonadati</taxon>
        <taxon>Chlamydiota</taxon>
        <taxon>Chlamydiia</taxon>
        <taxon>Parachlamydiales</taxon>
        <taxon>Parachlamydiaceae</taxon>
        <taxon>Candidatus Protochlamydia</taxon>
    </lineage>
</organism>
<reference key="1">
    <citation type="journal article" date="2004" name="Science">
        <title>Illuminating the evolutionary history of chlamydiae.</title>
        <authorList>
            <person name="Horn M."/>
            <person name="Collingro A."/>
            <person name="Schmitz-Esser S."/>
            <person name="Beier C.L."/>
            <person name="Purkhold U."/>
            <person name="Fartmann B."/>
            <person name="Brandt P."/>
            <person name="Nyakatura G.J."/>
            <person name="Droege M."/>
            <person name="Frishman D."/>
            <person name="Rattei T."/>
            <person name="Mewes H.-W."/>
            <person name="Wagner M."/>
        </authorList>
    </citation>
    <scope>NUCLEOTIDE SEQUENCE [LARGE SCALE GENOMIC DNA]</scope>
    <source>
        <strain>UWE25</strain>
    </source>
</reference>
<feature type="chain" id="PRO_0000224888" description="Holliday junction branch migration complex subunit RuvA">
    <location>
        <begin position="1"/>
        <end position="201"/>
    </location>
</feature>
<feature type="region of interest" description="Domain I" evidence="1">
    <location>
        <begin position="1"/>
        <end position="64"/>
    </location>
</feature>
<feature type="region of interest" description="Domain II" evidence="1">
    <location>
        <begin position="65"/>
        <end position="143"/>
    </location>
</feature>
<feature type="region of interest" description="Flexible linker" evidence="1">
    <location>
        <begin position="144"/>
        <end position="153"/>
    </location>
</feature>
<feature type="region of interest" description="Domain III" evidence="1">
    <location>
        <begin position="153"/>
        <end position="201"/>
    </location>
</feature>